<evidence type="ECO:0000255" key="1">
    <source>
        <dbReference type="HAMAP-Rule" id="MF_00031"/>
    </source>
</evidence>
<protein>
    <recommendedName>
        <fullName evidence="1">Holliday junction branch migration complex subunit RuvA</fullName>
    </recommendedName>
</protein>
<accession>Q8EPQ5</accession>
<proteinExistence type="inferred from homology"/>
<gene>
    <name evidence="1" type="primary">ruvA</name>
    <name type="ordered locus">OB2037</name>
</gene>
<comment type="function">
    <text evidence="1">The RuvA-RuvB-RuvC complex processes Holliday junction (HJ) DNA during genetic recombination and DNA repair, while the RuvA-RuvB complex plays an important role in the rescue of blocked DNA replication forks via replication fork reversal (RFR). RuvA specifically binds to HJ cruciform DNA, conferring on it an open structure. The RuvB hexamer acts as an ATP-dependent pump, pulling dsDNA into and through the RuvAB complex. HJ branch migration allows RuvC to scan DNA until it finds its consensus sequence, where it cleaves and resolves the cruciform DNA.</text>
</comment>
<comment type="subunit">
    <text evidence="1">Homotetramer. Forms an RuvA(8)-RuvB(12)-Holliday junction (HJ) complex. HJ DNA is sandwiched between 2 RuvA tetramers; dsDNA enters through RuvA and exits via RuvB. An RuvB hexamer assembles on each DNA strand where it exits the tetramer. Each RuvB hexamer is contacted by two RuvA subunits (via domain III) on 2 adjacent RuvB subunits; this complex drives branch migration. In the full resolvosome a probable DNA-RuvA(4)-RuvB(12)-RuvC(2) complex forms which resolves the HJ.</text>
</comment>
<comment type="subcellular location">
    <subcellularLocation>
        <location evidence="1">Cytoplasm</location>
    </subcellularLocation>
</comment>
<comment type="domain">
    <text evidence="1">Has three domains with a flexible linker between the domains II and III and assumes an 'L' shape. Domain III is highly mobile and contacts RuvB.</text>
</comment>
<comment type="similarity">
    <text evidence="1">Belongs to the RuvA family.</text>
</comment>
<dbReference type="EMBL" id="BA000028">
    <property type="protein sequence ID" value="BAC13993.1"/>
    <property type="molecule type" value="Genomic_DNA"/>
</dbReference>
<dbReference type="RefSeq" id="WP_011066432.1">
    <property type="nucleotide sequence ID" value="NC_004193.1"/>
</dbReference>
<dbReference type="SMR" id="Q8EPQ5"/>
<dbReference type="STRING" id="221109.gene:10734283"/>
<dbReference type="KEGG" id="oih:OB2037"/>
<dbReference type="eggNOG" id="COG0632">
    <property type="taxonomic scope" value="Bacteria"/>
</dbReference>
<dbReference type="HOGENOM" id="CLU_087936_1_0_9"/>
<dbReference type="OrthoDB" id="5293449at2"/>
<dbReference type="PhylomeDB" id="Q8EPQ5"/>
<dbReference type="Proteomes" id="UP000000822">
    <property type="component" value="Chromosome"/>
</dbReference>
<dbReference type="GO" id="GO:0005737">
    <property type="term" value="C:cytoplasm"/>
    <property type="evidence" value="ECO:0007669"/>
    <property type="project" value="UniProtKB-SubCell"/>
</dbReference>
<dbReference type="GO" id="GO:0009379">
    <property type="term" value="C:Holliday junction helicase complex"/>
    <property type="evidence" value="ECO:0007669"/>
    <property type="project" value="InterPro"/>
</dbReference>
<dbReference type="GO" id="GO:0048476">
    <property type="term" value="C:Holliday junction resolvase complex"/>
    <property type="evidence" value="ECO:0007669"/>
    <property type="project" value="UniProtKB-UniRule"/>
</dbReference>
<dbReference type="GO" id="GO:0005524">
    <property type="term" value="F:ATP binding"/>
    <property type="evidence" value="ECO:0007669"/>
    <property type="project" value="InterPro"/>
</dbReference>
<dbReference type="GO" id="GO:0000400">
    <property type="term" value="F:four-way junction DNA binding"/>
    <property type="evidence" value="ECO:0007669"/>
    <property type="project" value="UniProtKB-UniRule"/>
</dbReference>
<dbReference type="GO" id="GO:0009378">
    <property type="term" value="F:four-way junction helicase activity"/>
    <property type="evidence" value="ECO:0007669"/>
    <property type="project" value="InterPro"/>
</dbReference>
<dbReference type="GO" id="GO:0006310">
    <property type="term" value="P:DNA recombination"/>
    <property type="evidence" value="ECO:0007669"/>
    <property type="project" value="UniProtKB-UniRule"/>
</dbReference>
<dbReference type="GO" id="GO:0006281">
    <property type="term" value="P:DNA repair"/>
    <property type="evidence" value="ECO:0007669"/>
    <property type="project" value="UniProtKB-UniRule"/>
</dbReference>
<dbReference type="CDD" id="cd14332">
    <property type="entry name" value="UBA_RuvA_C"/>
    <property type="match status" value="1"/>
</dbReference>
<dbReference type="Gene3D" id="1.10.150.20">
    <property type="entry name" value="5' to 3' exonuclease, C-terminal subdomain"/>
    <property type="match status" value="1"/>
</dbReference>
<dbReference type="Gene3D" id="1.10.8.10">
    <property type="entry name" value="DNA helicase RuvA subunit, C-terminal domain"/>
    <property type="match status" value="1"/>
</dbReference>
<dbReference type="Gene3D" id="2.40.50.140">
    <property type="entry name" value="Nucleic acid-binding proteins"/>
    <property type="match status" value="1"/>
</dbReference>
<dbReference type="HAMAP" id="MF_00031">
    <property type="entry name" value="DNA_HJ_migration_RuvA"/>
    <property type="match status" value="1"/>
</dbReference>
<dbReference type="InterPro" id="IPR013849">
    <property type="entry name" value="DNA_helicase_Holl-junc_RuvA_I"/>
</dbReference>
<dbReference type="InterPro" id="IPR003583">
    <property type="entry name" value="Hlx-hairpin-Hlx_DNA-bd_motif"/>
</dbReference>
<dbReference type="InterPro" id="IPR012340">
    <property type="entry name" value="NA-bd_OB-fold"/>
</dbReference>
<dbReference type="InterPro" id="IPR000085">
    <property type="entry name" value="RuvA"/>
</dbReference>
<dbReference type="InterPro" id="IPR010994">
    <property type="entry name" value="RuvA_2-like"/>
</dbReference>
<dbReference type="InterPro" id="IPR011114">
    <property type="entry name" value="RuvA_C"/>
</dbReference>
<dbReference type="InterPro" id="IPR036267">
    <property type="entry name" value="RuvA_C_sf"/>
</dbReference>
<dbReference type="NCBIfam" id="TIGR00084">
    <property type="entry name" value="ruvA"/>
    <property type="match status" value="1"/>
</dbReference>
<dbReference type="Pfam" id="PF14520">
    <property type="entry name" value="HHH_5"/>
    <property type="match status" value="1"/>
</dbReference>
<dbReference type="Pfam" id="PF07499">
    <property type="entry name" value="RuvA_C"/>
    <property type="match status" value="1"/>
</dbReference>
<dbReference type="Pfam" id="PF01330">
    <property type="entry name" value="RuvA_N"/>
    <property type="match status" value="1"/>
</dbReference>
<dbReference type="SMART" id="SM00278">
    <property type="entry name" value="HhH1"/>
    <property type="match status" value="2"/>
</dbReference>
<dbReference type="SUPFAM" id="SSF46929">
    <property type="entry name" value="DNA helicase RuvA subunit, C-terminal domain"/>
    <property type="match status" value="1"/>
</dbReference>
<dbReference type="SUPFAM" id="SSF50249">
    <property type="entry name" value="Nucleic acid-binding proteins"/>
    <property type="match status" value="1"/>
</dbReference>
<dbReference type="SUPFAM" id="SSF47781">
    <property type="entry name" value="RuvA domain 2-like"/>
    <property type="match status" value="1"/>
</dbReference>
<organism>
    <name type="scientific">Oceanobacillus iheyensis (strain DSM 14371 / CIP 107618 / JCM 11309 / KCTC 3954 / HTE831)</name>
    <dbReference type="NCBI Taxonomy" id="221109"/>
    <lineage>
        <taxon>Bacteria</taxon>
        <taxon>Bacillati</taxon>
        <taxon>Bacillota</taxon>
        <taxon>Bacilli</taxon>
        <taxon>Bacillales</taxon>
        <taxon>Bacillaceae</taxon>
        <taxon>Oceanobacillus</taxon>
    </lineage>
</organism>
<name>RUVA_OCEIH</name>
<keyword id="KW-0963">Cytoplasm</keyword>
<keyword id="KW-0227">DNA damage</keyword>
<keyword id="KW-0233">DNA recombination</keyword>
<keyword id="KW-0234">DNA repair</keyword>
<keyword id="KW-0238">DNA-binding</keyword>
<keyword id="KW-1185">Reference proteome</keyword>
<reference key="1">
    <citation type="journal article" date="2002" name="Nucleic Acids Res.">
        <title>Genome sequence of Oceanobacillus iheyensis isolated from the Iheya Ridge and its unexpected adaptive capabilities to extreme environments.</title>
        <authorList>
            <person name="Takami H."/>
            <person name="Takaki Y."/>
            <person name="Uchiyama I."/>
        </authorList>
    </citation>
    <scope>NUCLEOTIDE SEQUENCE [LARGE SCALE GENOMIC DNA]</scope>
    <source>
        <strain>DSM 14371 / CIP 107618 / JCM 11309 / KCTC 3954 / HTE831</strain>
    </source>
</reference>
<sequence>MIAYIKGTLNSLGDESLIVDVGGIGYEIVCPNPFVFQDLLNQQIHIQTYHHVREDAQILFGFQNRDEKYLFTKLISVSGIGPKGALAILAGVDISGFIAAVENEDDKFLTSFPGVGKKTARQIILDLKGKLTSVFSITDEQQKSSVSNVNNNEVYSEAMEALKALGYTDKEVKQVLPHLKKDNDALSVDEAIRKALALLAK</sequence>
<feature type="chain" id="PRO_0000094658" description="Holliday junction branch migration complex subunit RuvA">
    <location>
        <begin position="1"/>
        <end position="201"/>
    </location>
</feature>
<feature type="region of interest" description="Domain I" evidence="1">
    <location>
        <begin position="1"/>
        <end position="63"/>
    </location>
</feature>
<feature type="region of interest" description="Domain II" evidence="1">
    <location>
        <begin position="64"/>
        <end position="142"/>
    </location>
</feature>
<feature type="region of interest" description="Flexible linker" evidence="1">
    <location>
        <begin position="143"/>
        <end position="149"/>
    </location>
</feature>
<feature type="region of interest" description="Domain III" evidence="1">
    <location>
        <begin position="150"/>
        <end position="201"/>
    </location>
</feature>